<keyword id="KW-0472">Membrane</keyword>
<keyword id="KW-0520">NAD</keyword>
<keyword id="KW-0521">NADP</keyword>
<keyword id="KW-0618">Plastoquinone</keyword>
<keyword id="KW-0874">Quinone</keyword>
<keyword id="KW-0793">Thylakoid</keyword>
<keyword id="KW-1278">Translocase</keyword>
<keyword id="KW-0812">Transmembrane</keyword>
<keyword id="KW-1133">Transmembrane helix</keyword>
<keyword id="KW-0813">Transport</keyword>
<dbReference type="EC" id="7.1.1.-" evidence="1"/>
<dbReference type="EMBL" id="CP000239">
    <property type="protein sequence ID" value="ABD00137.1"/>
    <property type="molecule type" value="Genomic_DNA"/>
</dbReference>
<dbReference type="RefSeq" id="WP_011430811.1">
    <property type="nucleotide sequence ID" value="NC_007775.1"/>
</dbReference>
<dbReference type="SMR" id="Q2JT70"/>
<dbReference type="STRING" id="321327.CYA_1994"/>
<dbReference type="KEGG" id="cya:CYA_1994"/>
<dbReference type="eggNOG" id="COG0838">
    <property type="taxonomic scope" value="Bacteria"/>
</dbReference>
<dbReference type="HOGENOM" id="CLU_119549_1_1_3"/>
<dbReference type="OrthoDB" id="9791970at2"/>
<dbReference type="Proteomes" id="UP000008818">
    <property type="component" value="Chromosome"/>
</dbReference>
<dbReference type="GO" id="GO:0030964">
    <property type="term" value="C:NADH dehydrogenase complex"/>
    <property type="evidence" value="ECO:0007669"/>
    <property type="project" value="TreeGrafter"/>
</dbReference>
<dbReference type="GO" id="GO:0031676">
    <property type="term" value="C:plasma membrane-derived thylakoid membrane"/>
    <property type="evidence" value="ECO:0007669"/>
    <property type="project" value="UniProtKB-SubCell"/>
</dbReference>
<dbReference type="GO" id="GO:0008137">
    <property type="term" value="F:NADH dehydrogenase (ubiquinone) activity"/>
    <property type="evidence" value="ECO:0007669"/>
    <property type="project" value="InterPro"/>
</dbReference>
<dbReference type="GO" id="GO:0048038">
    <property type="term" value="F:quinone binding"/>
    <property type="evidence" value="ECO:0007669"/>
    <property type="project" value="UniProtKB-KW"/>
</dbReference>
<dbReference type="GO" id="GO:0019684">
    <property type="term" value="P:photosynthesis, light reaction"/>
    <property type="evidence" value="ECO:0007669"/>
    <property type="project" value="UniProtKB-UniRule"/>
</dbReference>
<dbReference type="FunFam" id="1.20.58.1610:FF:000001">
    <property type="entry name" value="NAD(P)H-quinone oxidoreductase subunit 3, chloroplastic"/>
    <property type="match status" value="1"/>
</dbReference>
<dbReference type="Gene3D" id="1.20.58.1610">
    <property type="entry name" value="NADH:ubiquinone/plastoquinone oxidoreductase, chain 3"/>
    <property type="match status" value="1"/>
</dbReference>
<dbReference type="HAMAP" id="MF_01394">
    <property type="entry name" value="NDH1_NuoA"/>
    <property type="match status" value="1"/>
</dbReference>
<dbReference type="InterPro" id="IPR023043">
    <property type="entry name" value="NAD(P)H_OxRDtase_bac/plastid"/>
</dbReference>
<dbReference type="InterPro" id="IPR000440">
    <property type="entry name" value="NADH_UbQ/plastoQ_OxRdtase_su3"/>
</dbReference>
<dbReference type="InterPro" id="IPR038430">
    <property type="entry name" value="NDAH_ubi_oxred_su3_sf"/>
</dbReference>
<dbReference type="PANTHER" id="PTHR11058">
    <property type="entry name" value="NADH-UBIQUINONE OXIDOREDUCTASE CHAIN 3"/>
    <property type="match status" value="1"/>
</dbReference>
<dbReference type="PANTHER" id="PTHR11058:SF9">
    <property type="entry name" value="NADH-UBIQUINONE OXIDOREDUCTASE CHAIN 3"/>
    <property type="match status" value="1"/>
</dbReference>
<dbReference type="Pfam" id="PF00507">
    <property type="entry name" value="Oxidored_q4"/>
    <property type="match status" value="1"/>
</dbReference>
<evidence type="ECO:0000255" key="1">
    <source>
        <dbReference type="HAMAP-Rule" id="MF_01394"/>
    </source>
</evidence>
<accession>Q2JT70</accession>
<feature type="chain" id="PRO_0000362792" description="NAD(P)H-quinone oxidoreductase subunit 3">
    <location>
        <begin position="1"/>
        <end position="120"/>
    </location>
</feature>
<feature type="transmembrane region" description="Helical" evidence="1">
    <location>
        <begin position="10"/>
        <end position="30"/>
    </location>
</feature>
<feature type="transmembrane region" description="Helical" evidence="1">
    <location>
        <begin position="64"/>
        <end position="84"/>
    </location>
</feature>
<feature type="transmembrane region" description="Helical" evidence="1">
    <location>
        <begin position="89"/>
        <end position="109"/>
    </location>
</feature>
<reference key="1">
    <citation type="journal article" date="2007" name="ISME J.">
        <title>Population level functional diversity in a microbial community revealed by comparative genomic and metagenomic analyses.</title>
        <authorList>
            <person name="Bhaya D."/>
            <person name="Grossman A.R."/>
            <person name="Steunou A.-S."/>
            <person name="Khuri N."/>
            <person name="Cohan F.M."/>
            <person name="Hamamura N."/>
            <person name="Melendrez M.C."/>
            <person name="Bateson M.M."/>
            <person name="Ward D.M."/>
            <person name="Heidelberg J.F."/>
        </authorList>
    </citation>
    <scope>NUCLEOTIDE SEQUENCE [LARGE SCALE GENOMIC DNA]</scope>
    <source>
        <strain>JA-3-3Ab</strain>
    </source>
</reference>
<name>NU3C_SYNJA</name>
<protein>
    <recommendedName>
        <fullName evidence="1">NAD(P)H-quinone oxidoreductase subunit 3</fullName>
        <ecNumber evidence="1">7.1.1.-</ecNumber>
    </recommendedName>
    <alternativeName>
        <fullName evidence="1">NAD(P)H dehydrogenase subunit 3</fullName>
    </alternativeName>
    <alternativeName>
        <fullName evidence="1">NADH-plastoquinone oxidoreductase subunit 3</fullName>
    </alternativeName>
    <alternativeName>
        <fullName evidence="1">NDH-1 subunit 3</fullName>
        <shortName evidence="1">NDH-C</shortName>
    </alternativeName>
</protein>
<comment type="function">
    <text evidence="1">NDH-1 shuttles electrons from an unknown electron donor, via FMN and iron-sulfur (Fe-S) centers, to quinones in the respiratory and/or the photosynthetic chain. The immediate electron acceptor for the enzyme in this species is believed to be plastoquinone. Couples the redox reaction to proton translocation, and thus conserves the redox energy in a proton gradient. Cyanobacterial NDH-1 also plays a role in inorganic carbon-concentration.</text>
</comment>
<comment type="catalytic activity">
    <reaction evidence="1">
        <text>a plastoquinone + NADH + (n+1) H(+)(in) = a plastoquinol + NAD(+) + n H(+)(out)</text>
        <dbReference type="Rhea" id="RHEA:42608"/>
        <dbReference type="Rhea" id="RHEA-COMP:9561"/>
        <dbReference type="Rhea" id="RHEA-COMP:9562"/>
        <dbReference type="ChEBI" id="CHEBI:15378"/>
        <dbReference type="ChEBI" id="CHEBI:17757"/>
        <dbReference type="ChEBI" id="CHEBI:57540"/>
        <dbReference type="ChEBI" id="CHEBI:57945"/>
        <dbReference type="ChEBI" id="CHEBI:62192"/>
    </reaction>
</comment>
<comment type="catalytic activity">
    <reaction evidence="1">
        <text>a plastoquinone + NADPH + (n+1) H(+)(in) = a plastoquinol + NADP(+) + n H(+)(out)</text>
        <dbReference type="Rhea" id="RHEA:42612"/>
        <dbReference type="Rhea" id="RHEA-COMP:9561"/>
        <dbReference type="Rhea" id="RHEA-COMP:9562"/>
        <dbReference type="ChEBI" id="CHEBI:15378"/>
        <dbReference type="ChEBI" id="CHEBI:17757"/>
        <dbReference type="ChEBI" id="CHEBI:57783"/>
        <dbReference type="ChEBI" id="CHEBI:58349"/>
        <dbReference type="ChEBI" id="CHEBI:62192"/>
    </reaction>
</comment>
<comment type="subunit">
    <text evidence="1">NDH-1 can be composed of about 15 different subunits; different subcomplexes with different compositions have been identified which probably have different functions.</text>
</comment>
<comment type="subcellular location">
    <subcellularLocation>
        <location evidence="1">Cellular thylakoid membrane</location>
        <topology evidence="1">Multi-pass membrane protein</topology>
    </subcellularLocation>
</comment>
<comment type="similarity">
    <text evidence="1">Belongs to the complex I subunit 3 family.</text>
</comment>
<proteinExistence type="inferred from homology"/>
<sequence>MFVLSGYEYLLVFLIVCALLPVLALGASALLAPKRRGSLRRSTYESGMEPFGQAWIQFNIRYYMFALVFVIFDVETVFLYPWAVAFHRLGLLAFVEALIFIAILVVGLVYAWRKGALEWS</sequence>
<gene>
    <name evidence="1" type="primary">ndhC</name>
    <name type="ordered locus">CYA_1994</name>
</gene>
<organism>
    <name type="scientific">Synechococcus sp. (strain JA-3-3Ab)</name>
    <name type="common">Cyanobacteria bacterium Yellowstone A-Prime</name>
    <dbReference type="NCBI Taxonomy" id="321327"/>
    <lineage>
        <taxon>Bacteria</taxon>
        <taxon>Bacillati</taxon>
        <taxon>Cyanobacteriota</taxon>
        <taxon>Cyanophyceae</taxon>
        <taxon>Synechococcales</taxon>
        <taxon>Synechococcaceae</taxon>
        <taxon>Synechococcus</taxon>
    </lineage>
</organism>